<gene>
    <name evidence="1" type="primary">rpoZ</name>
    <name type="ordered locus">SAHV_1200</name>
</gene>
<name>RPOZ_STAA1</name>
<keyword id="KW-0240">DNA-directed RNA polymerase</keyword>
<keyword id="KW-0548">Nucleotidyltransferase</keyword>
<keyword id="KW-0804">Transcription</keyword>
<keyword id="KW-0808">Transferase</keyword>
<dbReference type="EC" id="2.7.7.6" evidence="1"/>
<dbReference type="EMBL" id="AP009324">
    <property type="protein sequence ID" value="BAF78083.1"/>
    <property type="molecule type" value="Genomic_DNA"/>
</dbReference>
<dbReference type="RefSeq" id="WP_000933956.1">
    <property type="nucleotide sequence ID" value="NZ_CTYB01000004.1"/>
</dbReference>
<dbReference type="SMR" id="A7X1G4"/>
<dbReference type="KEGG" id="saw:SAHV_1200"/>
<dbReference type="HOGENOM" id="CLU_125406_6_0_9"/>
<dbReference type="GO" id="GO:0000428">
    <property type="term" value="C:DNA-directed RNA polymerase complex"/>
    <property type="evidence" value="ECO:0007669"/>
    <property type="project" value="UniProtKB-KW"/>
</dbReference>
<dbReference type="GO" id="GO:0003677">
    <property type="term" value="F:DNA binding"/>
    <property type="evidence" value="ECO:0007669"/>
    <property type="project" value="UniProtKB-UniRule"/>
</dbReference>
<dbReference type="GO" id="GO:0003899">
    <property type="term" value="F:DNA-directed RNA polymerase activity"/>
    <property type="evidence" value="ECO:0007669"/>
    <property type="project" value="UniProtKB-UniRule"/>
</dbReference>
<dbReference type="GO" id="GO:0006351">
    <property type="term" value="P:DNA-templated transcription"/>
    <property type="evidence" value="ECO:0007669"/>
    <property type="project" value="UniProtKB-UniRule"/>
</dbReference>
<dbReference type="Gene3D" id="3.90.940.10">
    <property type="match status" value="1"/>
</dbReference>
<dbReference type="HAMAP" id="MF_00366">
    <property type="entry name" value="RNApol_bact_RpoZ"/>
    <property type="match status" value="1"/>
</dbReference>
<dbReference type="InterPro" id="IPR003716">
    <property type="entry name" value="DNA-dir_RNA_pol_omega"/>
</dbReference>
<dbReference type="InterPro" id="IPR006110">
    <property type="entry name" value="Pol_omega/Rpo6/RPB6"/>
</dbReference>
<dbReference type="InterPro" id="IPR036161">
    <property type="entry name" value="RPB6/omega-like_sf"/>
</dbReference>
<dbReference type="NCBIfam" id="TIGR00690">
    <property type="entry name" value="rpoZ"/>
    <property type="match status" value="1"/>
</dbReference>
<dbReference type="PANTHER" id="PTHR34476">
    <property type="entry name" value="DNA-DIRECTED RNA POLYMERASE SUBUNIT OMEGA"/>
    <property type="match status" value="1"/>
</dbReference>
<dbReference type="PANTHER" id="PTHR34476:SF1">
    <property type="entry name" value="DNA-DIRECTED RNA POLYMERASE SUBUNIT OMEGA"/>
    <property type="match status" value="1"/>
</dbReference>
<dbReference type="Pfam" id="PF01192">
    <property type="entry name" value="RNA_pol_Rpb6"/>
    <property type="match status" value="1"/>
</dbReference>
<dbReference type="SMART" id="SM01409">
    <property type="entry name" value="RNA_pol_Rpb6"/>
    <property type="match status" value="1"/>
</dbReference>
<dbReference type="SUPFAM" id="SSF63562">
    <property type="entry name" value="RPB6/omega subunit-like"/>
    <property type="match status" value="1"/>
</dbReference>
<organism>
    <name type="scientific">Staphylococcus aureus (strain Mu3 / ATCC 700698)</name>
    <dbReference type="NCBI Taxonomy" id="418127"/>
    <lineage>
        <taxon>Bacteria</taxon>
        <taxon>Bacillati</taxon>
        <taxon>Bacillota</taxon>
        <taxon>Bacilli</taxon>
        <taxon>Bacillales</taxon>
        <taxon>Staphylococcaceae</taxon>
        <taxon>Staphylococcus</taxon>
    </lineage>
</organism>
<proteinExistence type="inferred from homology"/>
<sequence length="72" mass="8150">MLNPPLNQLTSQIKSKYLIATTAAKRAREIDEQPETELLSEYHSFKPVGRALEEIADGKIRPVISSDYYGKE</sequence>
<reference key="1">
    <citation type="journal article" date="2008" name="Antimicrob. Agents Chemother.">
        <title>Mutated response regulator graR is responsible for phenotypic conversion of Staphylococcus aureus from heterogeneous vancomycin-intermediate resistance to vancomycin-intermediate resistance.</title>
        <authorList>
            <person name="Neoh H.-M."/>
            <person name="Cui L."/>
            <person name="Yuzawa H."/>
            <person name="Takeuchi F."/>
            <person name="Matsuo M."/>
            <person name="Hiramatsu K."/>
        </authorList>
    </citation>
    <scope>NUCLEOTIDE SEQUENCE [LARGE SCALE GENOMIC DNA]</scope>
    <source>
        <strain>Mu3 / ATCC 700698</strain>
    </source>
</reference>
<accession>A7X1G4</accession>
<evidence type="ECO:0000255" key="1">
    <source>
        <dbReference type="HAMAP-Rule" id="MF_00366"/>
    </source>
</evidence>
<protein>
    <recommendedName>
        <fullName evidence="1">DNA-directed RNA polymerase subunit omega</fullName>
        <shortName evidence="1">RNAP omega subunit</shortName>
        <ecNumber evidence="1">2.7.7.6</ecNumber>
    </recommendedName>
    <alternativeName>
        <fullName evidence="1">RNA polymerase omega subunit</fullName>
    </alternativeName>
    <alternativeName>
        <fullName evidence="1">Transcriptase subunit omega</fullName>
    </alternativeName>
</protein>
<feature type="chain" id="PRO_1000006022" description="DNA-directed RNA polymerase subunit omega">
    <location>
        <begin position="1"/>
        <end position="72"/>
    </location>
</feature>
<comment type="function">
    <text evidence="1">Promotes RNA polymerase assembly. Latches the N- and C-terminal regions of the beta' subunit thereby facilitating its interaction with the beta and alpha subunits.</text>
</comment>
<comment type="catalytic activity">
    <reaction evidence="1">
        <text>RNA(n) + a ribonucleoside 5'-triphosphate = RNA(n+1) + diphosphate</text>
        <dbReference type="Rhea" id="RHEA:21248"/>
        <dbReference type="Rhea" id="RHEA-COMP:14527"/>
        <dbReference type="Rhea" id="RHEA-COMP:17342"/>
        <dbReference type="ChEBI" id="CHEBI:33019"/>
        <dbReference type="ChEBI" id="CHEBI:61557"/>
        <dbReference type="ChEBI" id="CHEBI:140395"/>
        <dbReference type="EC" id="2.7.7.6"/>
    </reaction>
</comment>
<comment type="subunit">
    <text evidence="1">The RNAP catalytic core consists of 2 alpha, 1 beta, 1 beta' and 1 omega subunit. When a sigma factor is associated with the core the holoenzyme is formed, which can initiate transcription.</text>
</comment>
<comment type="similarity">
    <text evidence="1">Belongs to the RNA polymerase subunit omega family.</text>
</comment>